<proteinExistence type="evidence at protein level"/>
<sequence>MGPSWLLWTVAVAVLLLTRAASMEASSFCGHLEYWNSDKRCCSRCLQRFGPPACPDHEFTENCGLNDFGDTVAHPFKKCSPGYCNPNGTELCSQCSSGAAAAPAHVESPGRTHKQCRKKPVPPKDVCPLKPEDAGASSSPGRWSLGQTTKNEVSSRPGFVSASVLPLAVLPLLLVLLLILAVVLLSLFKRKVRSRPGSSSAFGDPSTSLHYWPCPGTLEVLESRNRGKANLLQLSSWELQGLASQPLSLLLDELEVLEELIMLLDPEPGPSGSTAYGTTRHLAARYGLPATWSTFAYSLRPSRSPLRALIEMVVAREPSATLGQFGTYLAQLGRTDALQVLSKLG</sequence>
<organism>
    <name type="scientific">Mus musculus</name>
    <name type="common">Mouse</name>
    <dbReference type="NCBI Taxonomy" id="10090"/>
    <lineage>
        <taxon>Eukaryota</taxon>
        <taxon>Metazoa</taxon>
        <taxon>Chordata</taxon>
        <taxon>Craniata</taxon>
        <taxon>Vertebrata</taxon>
        <taxon>Euteleostomi</taxon>
        <taxon>Mammalia</taxon>
        <taxon>Eutheria</taxon>
        <taxon>Euarchontoglires</taxon>
        <taxon>Glires</taxon>
        <taxon>Rodentia</taxon>
        <taxon>Myomorpha</taxon>
        <taxon>Muroidea</taxon>
        <taxon>Muridae</taxon>
        <taxon>Murinae</taxon>
        <taxon>Mus</taxon>
        <taxon>Mus</taxon>
    </lineage>
</organism>
<evidence type="ECO:0000255" key="1"/>
<evidence type="ECO:0000256" key="2">
    <source>
        <dbReference type="SAM" id="MobiDB-lite"/>
    </source>
</evidence>
<evidence type="ECO:0000269" key="3">
    <source>
    </source>
</evidence>
<evidence type="ECO:0000303" key="4">
    <source>
    </source>
</evidence>
<evidence type="ECO:0000305" key="5"/>
<comment type="function">
    <text evidence="3">Probable cell membrane receptor for the IGF-like family protein IGFL.</text>
</comment>
<comment type="interaction">
    <interactant intactId="EBI-3870498">
        <id>Q3U4N7</id>
    </interactant>
    <interactant intactId="EBI-3870418">
        <id>Q6B9Z0</id>
        <label>Igfl</label>
    </interactant>
    <organismsDiffer>false</organismsDiffer>
    <experiments>3</experiments>
</comment>
<comment type="subcellular location">
    <subcellularLocation>
        <location evidence="3">Cell membrane</location>
        <topology evidence="3">Single-pass type I membrane protein</topology>
    </subcellularLocation>
</comment>
<comment type="alternative products">
    <event type="alternative splicing"/>
    <isoform>
        <id>Q3U4N7-1</id>
        <name>1</name>
        <sequence type="displayed"/>
    </isoform>
    <isoform>
        <id>Q3U4N7-2</id>
        <name>2</name>
        <sequence type="described" ref="VSP_026146"/>
    </isoform>
</comment>
<comment type="tissue specificity">
    <text evidence="3">Ubiquitously expressed with higher expression in lymph node. Highly expressed in T-cells and monocytes.</text>
</comment>
<name>IGFR1_MOUSE</name>
<keyword id="KW-0025">Alternative splicing</keyword>
<keyword id="KW-1003">Cell membrane</keyword>
<keyword id="KW-0325">Glycoprotein</keyword>
<keyword id="KW-0472">Membrane</keyword>
<keyword id="KW-0675">Receptor</keyword>
<keyword id="KW-1185">Reference proteome</keyword>
<keyword id="KW-0732">Signal</keyword>
<keyword id="KW-0812">Transmembrane</keyword>
<keyword id="KW-1133">Transmembrane helix</keyword>
<reference key="1">
    <citation type="journal article" date="2005" name="Science">
        <title>The transcriptional landscape of the mammalian genome.</title>
        <authorList>
            <person name="Carninci P."/>
            <person name="Kasukawa T."/>
            <person name="Katayama S."/>
            <person name="Gough J."/>
            <person name="Frith M.C."/>
            <person name="Maeda N."/>
            <person name="Oyama R."/>
            <person name="Ravasi T."/>
            <person name="Lenhard B."/>
            <person name="Wells C."/>
            <person name="Kodzius R."/>
            <person name="Shimokawa K."/>
            <person name="Bajic V.B."/>
            <person name="Brenner S.E."/>
            <person name="Batalov S."/>
            <person name="Forrest A.R."/>
            <person name="Zavolan M."/>
            <person name="Davis M.J."/>
            <person name="Wilming L.G."/>
            <person name="Aidinis V."/>
            <person name="Allen J.E."/>
            <person name="Ambesi-Impiombato A."/>
            <person name="Apweiler R."/>
            <person name="Aturaliya R.N."/>
            <person name="Bailey T.L."/>
            <person name="Bansal M."/>
            <person name="Baxter L."/>
            <person name="Beisel K.W."/>
            <person name="Bersano T."/>
            <person name="Bono H."/>
            <person name="Chalk A.M."/>
            <person name="Chiu K.P."/>
            <person name="Choudhary V."/>
            <person name="Christoffels A."/>
            <person name="Clutterbuck D.R."/>
            <person name="Crowe M.L."/>
            <person name="Dalla E."/>
            <person name="Dalrymple B.P."/>
            <person name="de Bono B."/>
            <person name="Della Gatta G."/>
            <person name="di Bernardo D."/>
            <person name="Down T."/>
            <person name="Engstrom P."/>
            <person name="Fagiolini M."/>
            <person name="Faulkner G."/>
            <person name="Fletcher C.F."/>
            <person name="Fukushima T."/>
            <person name="Furuno M."/>
            <person name="Futaki S."/>
            <person name="Gariboldi M."/>
            <person name="Georgii-Hemming P."/>
            <person name="Gingeras T.R."/>
            <person name="Gojobori T."/>
            <person name="Green R.E."/>
            <person name="Gustincich S."/>
            <person name="Harbers M."/>
            <person name="Hayashi Y."/>
            <person name="Hensch T.K."/>
            <person name="Hirokawa N."/>
            <person name="Hill D."/>
            <person name="Huminiecki L."/>
            <person name="Iacono M."/>
            <person name="Ikeo K."/>
            <person name="Iwama A."/>
            <person name="Ishikawa T."/>
            <person name="Jakt M."/>
            <person name="Kanapin A."/>
            <person name="Katoh M."/>
            <person name="Kawasawa Y."/>
            <person name="Kelso J."/>
            <person name="Kitamura H."/>
            <person name="Kitano H."/>
            <person name="Kollias G."/>
            <person name="Krishnan S.P."/>
            <person name="Kruger A."/>
            <person name="Kummerfeld S.K."/>
            <person name="Kurochkin I.V."/>
            <person name="Lareau L.F."/>
            <person name="Lazarevic D."/>
            <person name="Lipovich L."/>
            <person name="Liu J."/>
            <person name="Liuni S."/>
            <person name="McWilliam S."/>
            <person name="Madan Babu M."/>
            <person name="Madera M."/>
            <person name="Marchionni L."/>
            <person name="Matsuda H."/>
            <person name="Matsuzawa S."/>
            <person name="Miki H."/>
            <person name="Mignone F."/>
            <person name="Miyake S."/>
            <person name="Morris K."/>
            <person name="Mottagui-Tabar S."/>
            <person name="Mulder N."/>
            <person name="Nakano N."/>
            <person name="Nakauchi H."/>
            <person name="Ng P."/>
            <person name="Nilsson R."/>
            <person name="Nishiguchi S."/>
            <person name="Nishikawa S."/>
            <person name="Nori F."/>
            <person name="Ohara O."/>
            <person name="Okazaki Y."/>
            <person name="Orlando V."/>
            <person name="Pang K.C."/>
            <person name="Pavan W.J."/>
            <person name="Pavesi G."/>
            <person name="Pesole G."/>
            <person name="Petrovsky N."/>
            <person name="Piazza S."/>
            <person name="Reed J."/>
            <person name="Reid J.F."/>
            <person name="Ring B.Z."/>
            <person name="Ringwald M."/>
            <person name="Rost B."/>
            <person name="Ruan Y."/>
            <person name="Salzberg S.L."/>
            <person name="Sandelin A."/>
            <person name="Schneider C."/>
            <person name="Schoenbach C."/>
            <person name="Sekiguchi K."/>
            <person name="Semple C.A."/>
            <person name="Seno S."/>
            <person name="Sessa L."/>
            <person name="Sheng Y."/>
            <person name="Shibata Y."/>
            <person name="Shimada H."/>
            <person name="Shimada K."/>
            <person name="Silva D."/>
            <person name="Sinclair B."/>
            <person name="Sperling S."/>
            <person name="Stupka E."/>
            <person name="Sugiura K."/>
            <person name="Sultana R."/>
            <person name="Takenaka Y."/>
            <person name="Taki K."/>
            <person name="Tammoja K."/>
            <person name="Tan S.L."/>
            <person name="Tang S."/>
            <person name="Taylor M.S."/>
            <person name="Tegner J."/>
            <person name="Teichmann S.A."/>
            <person name="Ueda H.R."/>
            <person name="van Nimwegen E."/>
            <person name="Verardo R."/>
            <person name="Wei C.L."/>
            <person name="Yagi K."/>
            <person name="Yamanishi H."/>
            <person name="Zabarovsky E."/>
            <person name="Zhu S."/>
            <person name="Zimmer A."/>
            <person name="Hide W."/>
            <person name="Bult C."/>
            <person name="Grimmond S.M."/>
            <person name="Teasdale R.D."/>
            <person name="Liu E.T."/>
            <person name="Brusic V."/>
            <person name="Quackenbush J."/>
            <person name="Wahlestedt C."/>
            <person name="Mattick J.S."/>
            <person name="Hume D.A."/>
            <person name="Kai C."/>
            <person name="Sasaki D."/>
            <person name="Tomaru Y."/>
            <person name="Fukuda S."/>
            <person name="Kanamori-Katayama M."/>
            <person name="Suzuki M."/>
            <person name="Aoki J."/>
            <person name="Arakawa T."/>
            <person name="Iida J."/>
            <person name="Imamura K."/>
            <person name="Itoh M."/>
            <person name="Kato T."/>
            <person name="Kawaji H."/>
            <person name="Kawagashira N."/>
            <person name="Kawashima T."/>
            <person name="Kojima M."/>
            <person name="Kondo S."/>
            <person name="Konno H."/>
            <person name="Nakano K."/>
            <person name="Ninomiya N."/>
            <person name="Nishio T."/>
            <person name="Okada M."/>
            <person name="Plessy C."/>
            <person name="Shibata K."/>
            <person name="Shiraki T."/>
            <person name="Suzuki S."/>
            <person name="Tagami M."/>
            <person name="Waki K."/>
            <person name="Watahiki A."/>
            <person name="Okamura-Oho Y."/>
            <person name="Suzuki H."/>
            <person name="Kawai J."/>
            <person name="Hayashizaki Y."/>
        </authorList>
    </citation>
    <scope>NUCLEOTIDE SEQUENCE [LARGE SCALE MRNA] (ISOFORM 1)</scope>
    <source>
        <strain>NOD</strain>
        <tissue>Dendritic cell</tissue>
    </source>
</reference>
<reference key="2">
    <citation type="journal article" date="2004" name="Genome Res.">
        <title>The status, quality, and expansion of the NIH full-length cDNA project: the Mammalian Gene Collection (MGC).</title>
        <authorList>
            <consortium name="The MGC Project Team"/>
        </authorList>
    </citation>
    <scope>NUCLEOTIDE SEQUENCE [LARGE SCALE MRNA] (ISOFORM 2)</scope>
    <source>
        <strain>Czech II</strain>
        <tissue>Mammary tumor</tissue>
    </source>
</reference>
<reference key="3">
    <citation type="journal article" date="2011" name="J. Biol. Chem.">
        <title>Murine IGFL and human IGFL1 are induced in inflammatory skin conditions and bind to a novel TNF receptor family member, IGFLR1.</title>
        <authorList>
            <person name="Lobito A.A."/>
            <person name="Ramani S.R."/>
            <person name="Tom I."/>
            <person name="Bazan J.F."/>
            <person name="Luis E."/>
            <person name="Fairbrother W.J."/>
            <person name="Ouyang W."/>
            <person name="Gonzalez L.C."/>
        </authorList>
    </citation>
    <scope>FUNCTION</scope>
    <scope>SUBCELLULAR LOCATION</scope>
    <scope>TISSUE SPECIFICITY</scope>
</reference>
<accession>Q3U4N7</accession>
<accession>Q8VE58</accession>
<protein>
    <recommendedName>
        <fullName>IGF-like family receptor 1</fullName>
    </recommendedName>
    <alternativeName>
        <fullName>Transmembrane protein 149</fullName>
    </alternativeName>
</protein>
<gene>
    <name type="primary">Igflr1</name>
    <name type="synonym">Tmem149</name>
</gene>
<dbReference type="EMBL" id="AK154129">
    <property type="protein sequence ID" value="BAE32394.1"/>
    <property type="molecule type" value="mRNA"/>
</dbReference>
<dbReference type="EMBL" id="BC019733">
    <property type="protein sequence ID" value="AAH19733.1"/>
    <property type="molecule type" value="mRNA"/>
</dbReference>
<dbReference type="CCDS" id="CCDS39886.1">
    <molecule id="Q3U4N7-1"/>
</dbReference>
<dbReference type="RefSeq" id="NP_663555.2">
    <molecule id="Q3U4N7-1"/>
    <property type="nucleotide sequence ID" value="NM_145580.2"/>
</dbReference>
<dbReference type="SMR" id="Q3U4N7"/>
<dbReference type="FunCoup" id="Q3U4N7">
    <property type="interactions" value="220"/>
</dbReference>
<dbReference type="IntAct" id="Q3U4N7">
    <property type="interactions" value="1"/>
</dbReference>
<dbReference type="STRING" id="10090.ENSMUSP00000042312"/>
<dbReference type="GlyCosmos" id="Q3U4N7">
    <property type="glycosylation" value="1 site, No reported glycans"/>
</dbReference>
<dbReference type="GlyGen" id="Q3U4N7">
    <property type="glycosylation" value="1 site"/>
</dbReference>
<dbReference type="PhosphoSitePlus" id="Q3U4N7"/>
<dbReference type="PaxDb" id="10090-ENSMUSP00000042312"/>
<dbReference type="ProteomicsDB" id="269535">
    <molecule id="Q3U4N7-1"/>
</dbReference>
<dbReference type="ProteomicsDB" id="269536">
    <molecule id="Q3U4N7-2"/>
</dbReference>
<dbReference type="Antibodypedia" id="2411">
    <property type="antibodies" value="86 antibodies from 17 providers"/>
</dbReference>
<dbReference type="DNASU" id="101883"/>
<dbReference type="Ensembl" id="ENSMUST00000043850.14">
    <molecule id="Q3U4N7-1"/>
    <property type="protein sequence ID" value="ENSMUSP00000042312.8"/>
    <property type="gene ID" value="ENSMUSG00000036826.15"/>
</dbReference>
<dbReference type="GeneID" id="101883"/>
<dbReference type="KEGG" id="mmu:101883"/>
<dbReference type="UCSC" id="uc009gfb.1">
    <molecule id="Q3U4N7-1"/>
    <property type="organism name" value="mouse"/>
</dbReference>
<dbReference type="AGR" id="MGI:3655979"/>
<dbReference type="CTD" id="79713"/>
<dbReference type="MGI" id="MGI:3655979">
    <property type="gene designation" value="Igflr1"/>
</dbReference>
<dbReference type="VEuPathDB" id="HostDB:ENSMUSG00000036826"/>
<dbReference type="eggNOG" id="ENOG502RZ9Q">
    <property type="taxonomic scope" value="Eukaryota"/>
</dbReference>
<dbReference type="GeneTree" id="ENSGT00390000005702"/>
<dbReference type="InParanoid" id="Q3U4N7"/>
<dbReference type="OrthoDB" id="80989at9989"/>
<dbReference type="PhylomeDB" id="Q3U4N7"/>
<dbReference type="TreeFam" id="TF338761"/>
<dbReference type="BioGRID-ORCS" id="101883">
    <property type="hits" value="2 hits in 77 CRISPR screens"/>
</dbReference>
<dbReference type="ChiTaRS" id="Igflr1">
    <property type="organism name" value="mouse"/>
</dbReference>
<dbReference type="PRO" id="PR:Q3U4N7"/>
<dbReference type="Proteomes" id="UP000000589">
    <property type="component" value="Chromosome 7"/>
</dbReference>
<dbReference type="RNAct" id="Q3U4N7">
    <property type="molecule type" value="protein"/>
</dbReference>
<dbReference type="Bgee" id="ENSMUSG00000036826">
    <property type="expression patterns" value="Expressed in bone marrow and 53 other cell types or tissues"/>
</dbReference>
<dbReference type="ExpressionAtlas" id="Q3U4N7">
    <property type="expression patterns" value="baseline"/>
</dbReference>
<dbReference type="GO" id="GO:0005886">
    <property type="term" value="C:plasma membrane"/>
    <property type="evidence" value="ECO:0000314"/>
    <property type="project" value="UniProtKB"/>
</dbReference>
<dbReference type="FunFam" id="1.10.533.10:FF:000079">
    <property type="entry name" value="IGF like family receptor 1"/>
    <property type="match status" value="1"/>
</dbReference>
<dbReference type="Gene3D" id="1.10.533.10">
    <property type="entry name" value="Death Domain, Fas"/>
    <property type="match status" value="1"/>
</dbReference>
<dbReference type="InterPro" id="IPR011029">
    <property type="entry name" value="DEATH-like_dom_sf"/>
</dbReference>
<dbReference type="InterPro" id="IPR042355">
    <property type="entry name" value="IGFLR1"/>
</dbReference>
<dbReference type="PANTHER" id="PTHR14657">
    <property type="entry name" value="IGF-LIKE FAMILY RECEPTOR 1"/>
    <property type="match status" value="1"/>
</dbReference>
<dbReference type="PANTHER" id="PTHR14657:SF2">
    <property type="entry name" value="IGF-LIKE FAMILY RECEPTOR 1"/>
    <property type="match status" value="1"/>
</dbReference>
<dbReference type="SUPFAM" id="SSF47986">
    <property type="entry name" value="DEATH domain"/>
    <property type="match status" value="1"/>
</dbReference>
<feature type="signal peptide" evidence="1">
    <location>
        <begin position="1"/>
        <end position="20"/>
    </location>
</feature>
<feature type="chain" id="PRO_0000290358" description="IGF-like family receptor 1">
    <location>
        <begin position="21"/>
        <end position="345"/>
    </location>
</feature>
<feature type="topological domain" description="Extracellular" evidence="1">
    <location>
        <begin position="21"/>
        <end position="163"/>
    </location>
</feature>
<feature type="transmembrane region" description="Helical" evidence="1">
    <location>
        <begin position="164"/>
        <end position="184"/>
    </location>
</feature>
<feature type="topological domain" description="Cytoplasmic" evidence="1">
    <location>
        <begin position="185"/>
        <end position="345"/>
    </location>
</feature>
<feature type="region of interest" description="Disordered" evidence="2">
    <location>
        <begin position="106"/>
        <end position="149"/>
    </location>
</feature>
<feature type="compositionally biased region" description="Basic residues" evidence="2">
    <location>
        <begin position="111"/>
        <end position="121"/>
    </location>
</feature>
<feature type="compositionally biased region" description="Polar residues" evidence="2">
    <location>
        <begin position="136"/>
        <end position="149"/>
    </location>
</feature>
<feature type="glycosylation site" description="N-linked (GlcNAc...) asparagine" evidence="1">
    <location>
        <position position="87"/>
    </location>
</feature>
<feature type="splice variant" id="VSP_026146" description="In isoform 2." evidence="4">
    <location>
        <position position="118"/>
    </location>
</feature>
<feature type="sequence conflict" description="In Ref. 2; AAH19733." evidence="5" ref="2">
    <original>R</original>
    <variation>Q</variation>
    <location>
        <position position="156"/>
    </location>
</feature>
<feature type="sequence conflict" description="In Ref. 2; AAH19733." evidence="5" ref="2">
    <original>G</original>
    <variation>S</variation>
    <location>
        <position position="197"/>
    </location>
</feature>